<dbReference type="EC" id="3.1.-.-"/>
<dbReference type="EMBL" id="AL123456">
    <property type="protein sequence ID" value="CCP44220.1"/>
    <property type="molecule type" value="Genomic_DNA"/>
</dbReference>
<dbReference type="PIR" id="H70871">
    <property type="entry name" value="H70871"/>
</dbReference>
<dbReference type="RefSeq" id="NP_215977.1">
    <property type="nucleotide sequence ID" value="NC_000962.3"/>
</dbReference>
<dbReference type="SMR" id="P9WFP7"/>
<dbReference type="FunCoup" id="P9WFP7">
    <property type="interactions" value="94"/>
</dbReference>
<dbReference type="STRING" id="83332.Rv1461"/>
<dbReference type="PaxDb" id="83332-Rv1461"/>
<dbReference type="GeneID" id="886609"/>
<dbReference type="KEGG" id="mtu:Rv1461"/>
<dbReference type="KEGG" id="mtv:RVBD_1461"/>
<dbReference type="TubercuList" id="Rv1461"/>
<dbReference type="eggNOG" id="COG0719">
    <property type="taxonomic scope" value="Bacteria"/>
</dbReference>
<dbReference type="eggNOG" id="COG1372">
    <property type="taxonomic scope" value="Bacteria"/>
</dbReference>
<dbReference type="InParanoid" id="P9WFP7"/>
<dbReference type="OrthoDB" id="9803529at2"/>
<dbReference type="Proteomes" id="UP000001584">
    <property type="component" value="Chromosome"/>
</dbReference>
<dbReference type="GO" id="GO:0005829">
    <property type="term" value="C:cytosol"/>
    <property type="evidence" value="ECO:0007005"/>
    <property type="project" value="MTBBASE"/>
</dbReference>
<dbReference type="GO" id="GO:0004519">
    <property type="term" value="F:endonuclease activity"/>
    <property type="evidence" value="ECO:0000314"/>
    <property type="project" value="MTBBASE"/>
</dbReference>
<dbReference type="GO" id="GO:0016539">
    <property type="term" value="P:intein-mediated protein splicing"/>
    <property type="evidence" value="ECO:0007669"/>
    <property type="project" value="InterPro"/>
</dbReference>
<dbReference type="GO" id="GO:0006314">
    <property type="term" value="P:intron homing"/>
    <property type="evidence" value="ECO:0007669"/>
    <property type="project" value="UniProtKB-KW"/>
</dbReference>
<dbReference type="GO" id="GO:0016226">
    <property type="term" value="P:iron-sulfur cluster assembly"/>
    <property type="evidence" value="ECO:0007669"/>
    <property type="project" value="InterPro"/>
</dbReference>
<dbReference type="CDD" id="cd00081">
    <property type="entry name" value="Hint"/>
    <property type="match status" value="1"/>
</dbReference>
<dbReference type="FunFam" id="3.10.28.10:FF:000006">
    <property type="entry name" value="FeS assembly protein SufB"/>
    <property type="match status" value="1"/>
</dbReference>
<dbReference type="FunFam" id="2.170.16.10:FF:000006">
    <property type="entry name" value="UPF0051 protein Mb1496"/>
    <property type="match status" value="1"/>
</dbReference>
<dbReference type="Gene3D" id="2.170.16.10">
    <property type="entry name" value="Hedgehog/Intein (Hint) domain"/>
    <property type="match status" value="1"/>
</dbReference>
<dbReference type="Gene3D" id="3.10.28.10">
    <property type="entry name" value="Homing endonucleases"/>
    <property type="match status" value="1"/>
</dbReference>
<dbReference type="InterPro" id="IPR055346">
    <property type="entry name" value="Fe-S_cluster_assembly_SufBD"/>
</dbReference>
<dbReference type="InterPro" id="IPR003586">
    <property type="entry name" value="Hint_dom_C"/>
</dbReference>
<dbReference type="InterPro" id="IPR003587">
    <property type="entry name" value="Hint_dom_N"/>
</dbReference>
<dbReference type="InterPro" id="IPR036844">
    <property type="entry name" value="Hint_dom_sf"/>
</dbReference>
<dbReference type="InterPro" id="IPR027434">
    <property type="entry name" value="Homing_endonucl"/>
</dbReference>
<dbReference type="InterPro" id="IPR006142">
    <property type="entry name" value="INTEIN"/>
</dbReference>
<dbReference type="InterPro" id="IPR030934">
    <property type="entry name" value="Intein_C"/>
</dbReference>
<dbReference type="InterPro" id="IPR004042">
    <property type="entry name" value="Intein_endonuc_central"/>
</dbReference>
<dbReference type="InterPro" id="IPR006141">
    <property type="entry name" value="Intein_N"/>
</dbReference>
<dbReference type="InterPro" id="IPR010231">
    <property type="entry name" value="SUF_FeS_clus_asmbl_SufB"/>
</dbReference>
<dbReference type="InterPro" id="IPR000825">
    <property type="entry name" value="SUF_FeS_clus_asmbl_SufBD_core"/>
</dbReference>
<dbReference type="InterPro" id="IPR037284">
    <property type="entry name" value="SUF_FeS_clus_asmbl_SufBD_sf"/>
</dbReference>
<dbReference type="InterPro" id="IPR045595">
    <property type="entry name" value="SufBD_N"/>
</dbReference>
<dbReference type="NCBIfam" id="TIGR01443">
    <property type="entry name" value="intein_Cterm"/>
    <property type="match status" value="1"/>
</dbReference>
<dbReference type="NCBIfam" id="TIGR01980">
    <property type="entry name" value="sufB"/>
    <property type="match status" value="1"/>
</dbReference>
<dbReference type="PANTHER" id="PTHR30508">
    <property type="entry name" value="FES CLUSTER ASSEMBLY PROTEIN SUF"/>
    <property type="match status" value="1"/>
</dbReference>
<dbReference type="PANTHER" id="PTHR30508:SF1">
    <property type="entry name" value="UPF0051 PROTEIN ABCI8, CHLOROPLASTIC-RELATED"/>
    <property type="match status" value="1"/>
</dbReference>
<dbReference type="Pfam" id="PF01458">
    <property type="entry name" value="SUFBD_core"/>
    <property type="match status" value="1"/>
</dbReference>
<dbReference type="Pfam" id="PF19295">
    <property type="entry name" value="SufBD_N"/>
    <property type="match status" value="1"/>
</dbReference>
<dbReference type="PRINTS" id="PR00379">
    <property type="entry name" value="INTEIN"/>
</dbReference>
<dbReference type="SMART" id="SM00305">
    <property type="entry name" value="HintC"/>
    <property type="match status" value="1"/>
</dbReference>
<dbReference type="SMART" id="SM00306">
    <property type="entry name" value="HintN"/>
    <property type="match status" value="1"/>
</dbReference>
<dbReference type="SUPFAM" id="SSF51294">
    <property type="entry name" value="Hedgehog/intein (Hint) domain"/>
    <property type="match status" value="1"/>
</dbReference>
<dbReference type="SUPFAM" id="SSF101960">
    <property type="entry name" value="Stabilizer of iron transporter SufD"/>
    <property type="match status" value="2"/>
</dbReference>
<dbReference type="PROSITE" id="PS50818">
    <property type="entry name" value="INTEIN_C_TER"/>
    <property type="match status" value="1"/>
</dbReference>
<dbReference type="PROSITE" id="PS50819">
    <property type="entry name" value="INTEIN_ENDONUCLEASE"/>
    <property type="match status" value="1"/>
</dbReference>
<dbReference type="PROSITE" id="PS50817">
    <property type="entry name" value="INTEIN_N_TER"/>
    <property type="match status" value="1"/>
</dbReference>
<evidence type="ECO:0000255" key="1"/>
<evidence type="ECO:0000255" key="2">
    <source>
        <dbReference type="PROSITE-ProRule" id="PRU00273"/>
    </source>
</evidence>
<evidence type="ECO:0000256" key="3">
    <source>
        <dbReference type="SAM" id="MobiDB-lite"/>
    </source>
</evidence>
<evidence type="ECO:0000305" key="4"/>
<name>Y1461_MYCTU</name>
<keyword id="KW-0068">Autocatalytic cleavage</keyword>
<keyword id="KW-0255">Endonuclease</keyword>
<keyword id="KW-0378">Hydrolase</keyword>
<keyword id="KW-0404">Intron homing</keyword>
<keyword id="KW-0540">Nuclease</keyword>
<keyword id="KW-0651">Protein splicing</keyword>
<keyword id="KW-1185">Reference proteome</keyword>
<comment type="PTM">
    <text evidence="4">This protein undergoes a protein self splicing that involves a post-translational excision of the intervening region (intein) followed by peptide ligation.</text>
</comment>
<comment type="miscellaneous">
    <text>Was identified as a high-confidence drug target.</text>
</comment>
<comment type="similarity">
    <text evidence="4">Belongs to the iron-sulfur cluster assembly SufBD family.</text>
</comment>
<protein>
    <recommendedName>
        <fullName>Iron-sulfur cluster assembly SufBD family protein Rv1461</fullName>
    </recommendedName>
    <component>
        <recommendedName>
            <fullName>Endonuclease PI-MtuHIIP</fullName>
            <ecNumber>3.1.-.-</ecNumber>
        </recommendedName>
        <alternativeName>
            <fullName>Mtu pps1 intein</fullName>
        </alternativeName>
    </component>
</protein>
<proteinExistence type="evidence at protein level"/>
<accession>P9WFP7</accession>
<accession>L0T8B9</accession>
<accession>O53152</accession>
<accession>P67125</accession>
<feature type="chain" id="PRO_0000036190" description="Iron-sulfur cluster assembly SufBD family protein Rv1461, 1st part" evidence="1">
    <location>
        <begin position="1"/>
        <end position="252"/>
    </location>
</feature>
<feature type="chain" id="PRO_0000036191" description="Endonuclease PI-MtuHIIP" evidence="1">
    <location>
        <begin position="253"/>
        <end position="611"/>
    </location>
</feature>
<feature type="chain" id="PRO_0000036192" description="Iron-sulfur cluster assembly SufBD family protein Rv1461, 2nd part" evidence="1">
    <location>
        <begin position="612"/>
        <end position="846"/>
    </location>
</feature>
<feature type="domain" description="DOD-type homing endonuclease" evidence="2">
    <location>
        <begin position="388"/>
        <end position="528"/>
    </location>
</feature>
<feature type="region of interest" description="Disordered" evidence="3">
    <location>
        <begin position="1"/>
        <end position="20"/>
    </location>
</feature>
<reference key="1">
    <citation type="journal article" date="1998" name="Nature">
        <title>Deciphering the biology of Mycobacterium tuberculosis from the complete genome sequence.</title>
        <authorList>
            <person name="Cole S.T."/>
            <person name="Brosch R."/>
            <person name="Parkhill J."/>
            <person name="Garnier T."/>
            <person name="Churcher C.M."/>
            <person name="Harris D.E."/>
            <person name="Gordon S.V."/>
            <person name="Eiglmeier K."/>
            <person name="Gas S."/>
            <person name="Barry C.E. III"/>
            <person name="Tekaia F."/>
            <person name="Badcock K."/>
            <person name="Basham D."/>
            <person name="Brown D."/>
            <person name="Chillingworth T."/>
            <person name="Connor R."/>
            <person name="Davies R.M."/>
            <person name="Devlin K."/>
            <person name="Feltwell T."/>
            <person name="Gentles S."/>
            <person name="Hamlin N."/>
            <person name="Holroyd S."/>
            <person name="Hornsby T."/>
            <person name="Jagels K."/>
            <person name="Krogh A."/>
            <person name="McLean J."/>
            <person name="Moule S."/>
            <person name="Murphy L.D."/>
            <person name="Oliver S."/>
            <person name="Osborne J."/>
            <person name="Quail M.A."/>
            <person name="Rajandream M.A."/>
            <person name="Rogers J."/>
            <person name="Rutter S."/>
            <person name="Seeger K."/>
            <person name="Skelton S."/>
            <person name="Squares S."/>
            <person name="Squares R."/>
            <person name="Sulston J.E."/>
            <person name="Taylor K."/>
            <person name="Whitehead S."/>
            <person name="Barrell B.G."/>
        </authorList>
    </citation>
    <scope>NUCLEOTIDE SEQUENCE [LARGE SCALE GENOMIC DNA]</scope>
    <source>
        <strain>ATCC 25618 / H37Rv</strain>
    </source>
</reference>
<reference key="2">
    <citation type="journal article" date="2008" name="BMC Syst. Biol.">
        <title>targetTB: a target identification pipeline for Mycobacterium tuberculosis through an interactome, reactome and genome-scale structural analysis.</title>
        <authorList>
            <person name="Raman K."/>
            <person name="Yeturu K."/>
            <person name="Chandra N."/>
        </authorList>
    </citation>
    <scope>IDENTIFICATION AS A DRUG TARGET [LARGE SCALE ANALYSIS]</scope>
</reference>
<reference key="3">
    <citation type="journal article" date="2011" name="Mol. Cell. Proteomics">
        <title>Proteogenomic analysis of Mycobacterium tuberculosis by high resolution mass spectrometry.</title>
        <authorList>
            <person name="Kelkar D.S."/>
            <person name="Kumar D."/>
            <person name="Kumar P."/>
            <person name="Balakrishnan L."/>
            <person name="Muthusamy B."/>
            <person name="Yadav A.K."/>
            <person name="Shrivastava P."/>
            <person name="Marimuthu A."/>
            <person name="Anand S."/>
            <person name="Sundaram H."/>
            <person name="Kingsbury R."/>
            <person name="Harsha H.C."/>
            <person name="Nair B."/>
            <person name="Prasad T.S."/>
            <person name="Chauhan D.S."/>
            <person name="Katoch K."/>
            <person name="Katoch V.M."/>
            <person name="Kumar P."/>
            <person name="Chaerkady R."/>
            <person name="Ramachandran S."/>
            <person name="Dash D."/>
            <person name="Pandey A."/>
        </authorList>
    </citation>
    <scope>IDENTIFICATION BY MASS SPECTROMETRY [LARGE SCALE ANALYSIS]</scope>
    <source>
        <strain>ATCC 25618 / H37Rv</strain>
    </source>
</reference>
<sequence length="846" mass="94171">MTLTPEASKSVAQPPTQAPLTQEEAIASLGRYGYGWADSDVAGANAQRGLSEAVVRDISAKKNEPDWMLQSRLKALRIFDRKPIPKWGSNLDGIDFDNIKYFVRSTEKQAASWDDLPEDIRNTYDRLGIPEAEKQRLVAGVAAQYESEVVYHQIREDLEAQGVIFLDTDTGLREHPDIFKEYFGTVIPAGDNKFSALNTAVWSGGSFIYVPPGVHVDIPLQAYFRINTENMGQFERTLIIADEGSYVHYVEGCLPAGELITTADGDLRPIESIRVGDFVTGHDGRPHRVTAVQVRDLDGELFTFTPMSPANAFSVTAEHPLLAIPRDEVRVMRKERNGWKAEVNSTKLRSAEPRWIAAKDVAEGDFLIYPKPKPIPHRTVLPLEFARLAGYYLAEGHACLTNGCESLIFSFHSDEFEYVEDVRQACKSLYEKSGSVLIEEHKHSARVTVYTKAGYAAMRDNVGIGSSNKKLSDLLMRQDETFLRELVDAYVNGDGNVTRRNGAVWKRVHTTSRLWAFQLQSILARLGHYATVELRRPGGPGVIMGRNVVRKDIYQVQWTEGGRGPKQARDCGDYFAVPIKKRAVREAHEPVYNLDVENPDSYLAYGFAVHNCTAPIYKSDSLHSAVVEIIVKPHARVRYTTIQNWSNNVYNLVTKRARAEAGATMEWIDGNIGSKVTMKYPAVWMTGEHAKGEVLSVAFAGEDQHQDTGAKMLHLAPNTSSNIVSKSVARGGGRTSYRGLVQVNKGAHGSRSSVKCDALLVDTVSRSDTYPYVDIREDDVTMGHEATVSKVSENQLFYLMSRGLTEDEAMAMVVRGFVEPIAKELPMEYALELNRLIELQMEGAVG</sequence>
<gene>
    <name type="ordered locus">Rv1461</name>
    <name type="ORF">MTV007.08</name>
</gene>
<organism>
    <name type="scientific">Mycobacterium tuberculosis (strain ATCC 25618 / H37Rv)</name>
    <dbReference type="NCBI Taxonomy" id="83332"/>
    <lineage>
        <taxon>Bacteria</taxon>
        <taxon>Bacillati</taxon>
        <taxon>Actinomycetota</taxon>
        <taxon>Actinomycetes</taxon>
        <taxon>Mycobacteriales</taxon>
        <taxon>Mycobacteriaceae</taxon>
        <taxon>Mycobacterium</taxon>
        <taxon>Mycobacterium tuberculosis complex</taxon>
    </lineage>
</organism>